<dbReference type="EMBL" id="X75628">
    <property type="protein sequence ID" value="CAA53293.1"/>
    <property type="molecule type" value="mRNA"/>
</dbReference>
<dbReference type="PIR" id="S45304">
    <property type="entry name" value="S45304"/>
</dbReference>
<dbReference type="SMR" id="P49633"/>
<dbReference type="VEuPathDB" id="AmoebaDB:ACA1_098060"/>
<dbReference type="GO" id="GO:0005737">
    <property type="term" value="C:cytoplasm"/>
    <property type="evidence" value="ECO:0007669"/>
    <property type="project" value="UniProtKB-SubCell"/>
</dbReference>
<dbReference type="GO" id="GO:0005634">
    <property type="term" value="C:nucleus"/>
    <property type="evidence" value="ECO:0007669"/>
    <property type="project" value="UniProtKB-SubCell"/>
</dbReference>
<dbReference type="GO" id="GO:1990904">
    <property type="term" value="C:ribonucleoprotein complex"/>
    <property type="evidence" value="ECO:0007669"/>
    <property type="project" value="UniProtKB-KW"/>
</dbReference>
<dbReference type="GO" id="GO:0005840">
    <property type="term" value="C:ribosome"/>
    <property type="evidence" value="ECO:0007669"/>
    <property type="project" value="UniProtKB-KW"/>
</dbReference>
<dbReference type="GO" id="GO:0003735">
    <property type="term" value="F:structural constituent of ribosome"/>
    <property type="evidence" value="ECO:0007669"/>
    <property type="project" value="InterPro"/>
</dbReference>
<dbReference type="GO" id="GO:0006412">
    <property type="term" value="P:translation"/>
    <property type="evidence" value="ECO:0007669"/>
    <property type="project" value="InterPro"/>
</dbReference>
<dbReference type="CDD" id="cd01803">
    <property type="entry name" value="Ubl_ubiquitin"/>
    <property type="match status" value="1"/>
</dbReference>
<dbReference type="FunFam" id="3.10.20.90:FF:000014">
    <property type="entry name" value="Ubiquitin-60S ribosomal L40 fusion"/>
    <property type="match status" value="1"/>
</dbReference>
<dbReference type="FunFam" id="4.10.1060.50:FF:000001">
    <property type="entry name" value="ubiquitin-60S ribosomal protein L40"/>
    <property type="match status" value="1"/>
</dbReference>
<dbReference type="Gene3D" id="4.10.1060.50">
    <property type="match status" value="1"/>
</dbReference>
<dbReference type="Gene3D" id="3.10.20.90">
    <property type="entry name" value="Phosphatidylinositol 3-kinase Catalytic Subunit, Chain A, domain 1"/>
    <property type="match status" value="1"/>
</dbReference>
<dbReference type="InterPro" id="IPR001975">
    <property type="entry name" value="Ribosomal_eL40_dom"/>
</dbReference>
<dbReference type="InterPro" id="IPR038587">
    <property type="entry name" value="Ribosomal_eL40_sf"/>
</dbReference>
<dbReference type="InterPro" id="IPR000626">
    <property type="entry name" value="Ubiquitin-like_dom"/>
</dbReference>
<dbReference type="InterPro" id="IPR029071">
    <property type="entry name" value="Ubiquitin-like_domsf"/>
</dbReference>
<dbReference type="InterPro" id="IPR019954">
    <property type="entry name" value="Ubiquitin_CS"/>
</dbReference>
<dbReference type="InterPro" id="IPR019956">
    <property type="entry name" value="Ubiquitin_dom"/>
</dbReference>
<dbReference type="InterPro" id="IPR050158">
    <property type="entry name" value="Ubiquitin_ubiquitin-like"/>
</dbReference>
<dbReference type="PANTHER" id="PTHR10666">
    <property type="entry name" value="UBIQUITIN"/>
    <property type="match status" value="1"/>
</dbReference>
<dbReference type="Pfam" id="PF01020">
    <property type="entry name" value="Ribosomal_L40e"/>
    <property type="match status" value="1"/>
</dbReference>
<dbReference type="Pfam" id="PF00240">
    <property type="entry name" value="ubiquitin"/>
    <property type="match status" value="1"/>
</dbReference>
<dbReference type="PRINTS" id="PR00348">
    <property type="entry name" value="UBIQUITIN"/>
</dbReference>
<dbReference type="SMART" id="SM01377">
    <property type="entry name" value="Ribosomal_L40e"/>
    <property type="match status" value="1"/>
</dbReference>
<dbReference type="SMART" id="SM00213">
    <property type="entry name" value="UBQ"/>
    <property type="match status" value="1"/>
</dbReference>
<dbReference type="SUPFAM" id="SSF54236">
    <property type="entry name" value="Ubiquitin-like"/>
    <property type="match status" value="1"/>
</dbReference>
<dbReference type="PROSITE" id="PS00299">
    <property type="entry name" value="UBIQUITIN_1"/>
    <property type="match status" value="1"/>
</dbReference>
<dbReference type="PROSITE" id="PS50053">
    <property type="entry name" value="UBIQUITIN_2"/>
    <property type="match status" value="1"/>
</dbReference>
<sequence length="128" mass="14766">MQIFVKTLTGKTITLEVESSDTIENVKQKIQDKEGIPPDQQRLIFAGKQLEDGRTLADYNIQKESTLHLVLRLRGGVIEPSLQVLARKYNCDKVVCRKCYARLHPRAVNCRKKKCGHSNHWRPKKKLK</sequence>
<feature type="chain" id="PRO_0000114821" description="Ubiquitin">
    <location>
        <begin position="1"/>
        <end position="76"/>
    </location>
</feature>
<feature type="chain" id="PRO_0000138757" description="Large ribosomal subunit protein eL40">
    <location>
        <begin position="77"/>
        <end position="128"/>
    </location>
</feature>
<feature type="domain" description="Ubiquitin-like" evidence="2">
    <location>
        <begin position="1"/>
        <end position="76"/>
    </location>
</feature>
<feature type="cross-link" description="Glycyl lysine isopeptide (Lys-Gly) (interchain with G-Cter in ubiquitin)" evidence="1">
    <location>
        <position position="48"/>
    </location>
</feature>
<feature type="cross-link" description="Glycyl lysine isopeptide (Gly-Lys) (interchain with K-? in acceptor proteins)" evidence="2">
    <location>
        <position position="76"/>
    </location>
</feature>
<protein>
    <recommendedName>
        <fullName evidence="3">Ubiquitin-ribosomal protein eL40 fusion protein</fullName>
    </recommendedName>
    <alternativeName>
        <fullName>Ubiquitin A-52 residue ribosomal protein fusion product 1</fullName>
    </alternativeName>
    <component>
        <recommendedName>
            <fullName>Ubiquitin</fullName>
        </recommendedName>
    </component>
    <component>
        <recommendedName>
            <fullName evidence="3">Large ribosomal subunit protein eL40</fullName>
        </recommendedName>
        <alternativeName>
            <fullName>60S ribosomal protein L40</fullName>
        </alternativeName>
        <alternativeName>
            <fullName>CEP52</fullName>
        </alternativeName>
    </component>
</protein>
<keyword id="KW-0963">Cytoplasm</keyword>
<keyword id="KW-1017">Isopeptide bond</keyword>
<keyword id="KW-0539">Nucleus</keyword>
<keyword id="KW-0687">Ribonucleoprotein</keyword>
<keyword id="KW-0689">Ribosomal protein</keyword>
<keyword id="KW-0832">Ubl conjugation</keyword>
<reference key="1">
    <citation type="journal article" date="1994" name="Biochim. Biophys. Acta">
        <title>An Acanthamoeba ubiquitin-fusion protein; cDNA and deduced protein sequence.</title>
        <authorList>
            <person name="Ahn K.S."/>
            <person name="Henney H.R. Jr."/>
        </authorList>
    </citation>
    <scope>NUCLEOTIDE SEQUENCE [MRNA]</scope>
</reference>
<name>RL40_ACACA</name>
<accession>P49633</accession>
<accession>P49634</accession>
<evidence type="ECO:0000250" key="1"/>
<evidence type="ECO:0000255" key="2">
    <source>
        <dbReference type="PROSITE-ProRule" id="PRU00214"/>
    </source>
</evidence>
<evidence type="ECO:0000305" key="3"/>
<organism>
    <name type="scientific">Acanthamoeba castellanii</name>
    <name type="common">Amoeba</name>
    <dbReference type="NCBI Taxonomy" id="5755"/>
    <lineage>
        <taxon>Eukaryota</taxon>
        <taxon>Amoebozoa</taxon>
        <taxon>Discosea</taxon>
        <taxon>Longamoebia</taxon>
        <taxon>Centramoebida</taxon>
        <taxon>Acanthamoebidae</taxon>
        <taxon>Acanthamoeba</taxon>
    </lineage>
</organism>
<comment type="function">
    <molecule>Ubiquitin</molecule>
    <text evidence="1">Exists either covalently attached to another protein, or free (unanchored). When covalently bound, it is conjugated to target proteins via an isopeptide bond either as a monomer (monoubiquitin), a polymer linked via different Lys residues of the ubiquitin (polyubiquitin chains) or a linear polymer linked via the initiator Met of the ubiquitin (linear polyubiquitin chains). Polyubiquitin chains, when attached to a target protein, have different functions depending on the Lys residue of the ubiquitin that is linked: Lys-48-linked is involved in protein degradation via the proteasome. Linear polymer chains formed via attachment by the initiator Met lead to cell signaling. Ubiquitin is usually conjugated to Lys residues of target proteins, however, in rare cases, conjugation to Cys or Ser residues has been observed. When polyubiquitin is free (unanchored-polyubiquitin), it also has distinct roles, such as in activation of protein kinases, and in signaling (By similarity).</text>
</comment>
<comment type="function">
    <molecule>Large ribosomal subunit protein eL40</molecule>
    <text evidence="1">Component of the 60S subunit of the ribosome.</text>
</comment>
<comment type="subunit">
    <molecule>Large ribosomal subunit protein eL40</molecule>
    <text evidence="1">Part of the 60S ribosomal subunit.</text>
</comment>
<comment type="subcellular location">
    <molecule>Ubiquitin</molecule>
    <subcellularLocation>
        <location evidence="1">Cytoplasm</location>
    </subcellularLocation>
    <subcellularLocation>
        <location evidence="1">Nucleus</location>
    </subcellularLocation>
</comment>
<comment type="subcellular location">
    <molecule>Large ribosomal subunit protein eL40</molecule>
    <subcellularLocation>
        <location evidence="1">Cytoplasm</location>
    </subcellularLocation>
</comment>
<comment type="miscellaneous">
    <text>Ubiquitin is encoded by 4 different genes. Uba52 and Rps27a genes code for a single copy of ubiquitin fused to the ribosomal proteins eL40 and eS31, respectively. UBB and UBC genes code for a polyubiquitin precursor with exact head to tail repeats, the number of repeats differ between species and strains.</text>
</comment>
<comment type="similarity">
    <text evidence="3">In the N-terminal section; belongs to the ubiquitin family.</text>
</comment>
<comment type="similarity">
    <text evidence="3">In the C-terminal section; belongs to the eukaryotic ribosomal protein eL40 family.</text>
</comment>
<comment type="similarity">
    <text evidence="3">Belongs to the ubiquitin family.</text>
</comment>
<proteinExistence type="evidence at transcript level"/>